<reference key="1">
    <citation type="journal article" date="2001" name="J. Cell Sci.">
        <title>Fission yeast mfr1 activates APC and coordinates meiotic nuclear division with sporulation.</title>
        <authorList>
            <person name="Blanco M.A."/>
            <person name="Pelloquin L."/>
            <person name="Moreno S."/>
        </authorList>
    </citation>
    <scope>NUCLEOTIDE SEQUENCE [GENOMIC DNA]</scope>
    <scope>FUNCTION</scope>
    <scope>SUBCELLULAR LOCATION</scope>
</reference>
<reference key="2">
    <citation type="journal article" date="2002" name="Nature">
        <title>The genome sequence of Schizosaccharomyces pombe.</title>
        <authorList>
            <person name="Wood V."/>
            <person name="Gwilliam R."/>
            <person name="Rajandream M.A."/>
            <person name="Lyne M.H."/>
            <person name="Lyne R."/>
            <person name="Stewart A."/>
            <person name="Sgouros J.G."/>
            <person name="Peat N."/>
            <person name="Hayles J."/>
            <person name="Baker S.G."/>
            <person name="Basham D."/>
            <person name="Bowman S."/>
            <person name="Brooks K."/>
            <person name="Brown D."/>
            <person name="Brown S."/>
            <person name="Chillingworth T."/>
            <person name="Churcher C.M."/>
            <person name="Collins M."/>
            <person name="Connor R."/>
            <person name="Cronin A."/>
            <person name="Davis P."/>
            <person name="Feltwell T."/>
            <person name="Fraser A."/>
            <person name="Gentles S."/>
            <person name="Goble A."/>
            <person name="Hamlin N."/>
            <person name="Harris D.E."/>
            <person name="Hidalgo J."/>
            <person name="Hodgson G."/>
            <person name="Holroyd S."/>
            <person name="Hornsby T."/>
            <person name="Howarth S."/>
            <person name="Huckle E.J."/>
            <person name="Hunt S."/>
            <person name="Jagels K."/>
            <person name="James K.D."/>
            <person name="Jones L."/>
            <person name="Jones M."/>
            <person name="Leather S."/>
            <person name="McDonald S."/>
            <person name="McLean J."/>
            <person name="Mooney P."/>
            <person name="Moule S."/>
            <person name="Mungall K.L."/>
            <person name="Murphy L.D."/>
            <person name="Niblett D."/>
            <person name="Odell C."/>
            <person name="Oliver K."/>
            <person name="O'Neil S."/>
            <person name="Pearson D."/>
            <person name="Quail M.A."/>
            <person name="Rabbinowitsch E."/>
            <person name="Rutherford K.M."/>
            <person name="Rutter S."/>
            <person name="Saunders D."/>
            <person name="Seeger K."/>
            <person name="Sharp S."/>
            <person name="Skelton J."/>
            <person name="Simmonds M.N."/>
            <person name="Squares R."/>
            <person name="Squares S."/>
            <person name="Stevens K."/>
            <person name="Taylor K."/>
            <person name="Taylor R.G."/>
            <person name="Tivey A."/>
            <person name="Walsh S.V."/>
            <person name="Warren T."/>
            <person name="Whitehead S."/>
            <person name="Woodward J.R."/>
            <person name="Volckaert G."/>
            <person name="Aert R."/>
            <person name="Robben J."/>
            <person name="Grymonprez B."/>
            <person name="Weltjens I."/>
            <person name="Vanstreels E."/>
            <person name="Rieger M."/>
            <person name="Schaefer M."/>
            <person name="Mueller-Auer S."/>
            <person name="Gabel C."/>
            <person name="Fuchs M."/>
            <person name="Duesterhoeft A."/>
            <person name="Fritzc C."/>
            <person name="Holzer E."/>
            <person name="Moestl D."/>
            <person name="Hilbert H."/>
            <person name="Borzym K."/>
            <person name="Langer I."/>
            <person name="Beck A."/>
            <person name="Lehrach H."/>
            <person name="Reinhardt R."/>
            <person name="Pohl T.M."/>
            <person name="Eger P."/>
            <person name="Zimmermann W."/>
            <person name="Wedler H."/>
            <person name="Wambutt R."/>
            <person name="Purnelle B."/>
            <person name="Goffeau A."/>
            <person name="Cadieu E."/>
            <person name="Dreano S."/>
            <person name="Gloux S."/>
            <person name="Lelaure V."/>
            <person name="Mottier S."/>
            <person name="Galibert F."/>
            <person name="Aves S.J."/>
            <person name="Xiang Z."/>
            <person name="Hunt C."/>
            <person name="Moore K."/>
            <person name="Hurst S.M."/>
            <person name="Lucas M."/>
            <person name="Rochet M."/>
            <person name="Gaillardin C."/>
            <person name="Tallada V.A."/>
            <person name="Garzon A."/>
            <person name="Thode G."/>
            <person name="Daga R.R."/>
            <person name="Cruzado L."/>
            <person name="Jimenez J."/>
            <person name="Sanchez M."/>
            <person name="del Rey F."/>
            <person name="Benito J."/>
            <person name="Dominguez A."/>
            <person name="Revuelta J.L."/>
            <person name="Moreno S."/>
            <person name="Armstrong J."/>
            <person name="Forsburg S.L."/>
            <person name="Cerutti L."/>
            <person name="Lowe T."/>
            <person name="McCombie W.R."/>
            <person name="Paulsen I."/>
            <person name="Potashkin J."/>
            <person name="Shpakovski G.V."/>
            <person name="Ussery D."/>
            <person name="Barrell B.G."/>
            <person name="Nurse P."/>
        </authorList>
    </citation>
    <scope>NUCLEOTIDE SEQUENCE [LARGE SCALE GENOMIC DNA]</scope>
    <source>
        <strain>972 / ATCC 24843</strain>
    </source>
</reference>
<reference key="3">
    <citation type="journal article" date="2005" name="Nature">
        <title>Fission yeast Mes1p ensures the onset of meiosis II by blocking degradation of cyclin Cdc13p.</title>
        <authorList>
            <person name="Izawa D."/>
            <person name="Goto M."/>
            <person name="Yamashita A."/>
            <person name="Yamano H."/>
            <person name="Yamamoto M."/>
        </authorList>
    </citation>
    <scope>INTERACTION WITH MES1</scope>
</reference>
<dbReference type="EMBL" id="CU329671">
    <property type="protein sequence ID" value="CAB91187.1"/>
    <property type="molecule type" value="Genomic_DNA"/>
</dbReference>
<dbReference type="PIR" id="T40614">
    <property type="entry name" value="T40614"/>
</dbReference>
<dbReference type="RefSeq" id="NP_595081.1">
    <property type="nucleotide sequence ID" value="NM_001020987.1"/>
</dbReference>
<dbReference type="SMR" id="O94423"/>
<dbReference type="BioGRID" id="276581">
    <property type="interactions" value="20"/>
</dbReference>
<dbReference type="ComplexPortal" id="CPX-766">
    <property type="entry name" value="Anaphase-promoting complex, mfr1 variant"/>
</dbReference>
<dbReference type="ELM" id="O94423"/>
<dbReference type="FunCoup" id="O94423">
    <property type="interactions" value="215"/>
</dbReference>
<dbReference type="IntAct" id="O94423">
    <property type="interactions" value="2"/>
</dbReference>
<dbReference type="STRING" id="284812.O94423"/>
<dbReference type="iPTMnet" id="O94423"/>
<dbReference type="PaxDb" id="4896-SPBC1198.12.1"/>
<dbReference type="EnsemblFungi" id="SPBC1198.12.1">
    <property type="protein sequence ID" value="SPBC1198.12.1:pep"/>
    <property type="gene ID" value="SPBC1198.12"/>
</dbReference>
<dbReference type="GeneID" id="2540043"/>
<dbReference type="KEGG" id="spo:2540043"/>
<dbReference type="PomBase" id="SPBC1198.12">
    <property type="gene designation" value="mfr1"/>
</dbReference>
<dbReference type="VEuPathDB" id="FungiDB:SPBC1198.12"/>
<dbReference type="eggNOG" id="KOG0305">
    <property type="taxonomic scope" value="Eukaryota"/>
</dbReference>
<dbReference type="HOGENOM" id="CLU_014831_4_2_1"/>
<dbReference type="InParanoid" id="O94423"/>
<dbReference type="OMA" id="FHHEYEK"/>
<dbReference type="PhylomeDB" id="O94423"/>
<dbReference type="PRO" id="PR:O94423"/>
<dbReference type="Proteomes" id="UP000002485">
    <property type="component" value="Chromosome II"/>
</dbReference>
<dbReference type="GO" id="GO:0005680">
    <property type="term" value="C:anaphase-promoting complex"/>
    <property type="evidence" value="ECO:0000318"/>
    <property type="project" value="GO_Central"/>
</dbReference>
<dbReference type="GO" id="GO:0010997">
    <property type="term" value="F:anaphase-promoting complex binding"/>
    <property type="evidence" value="ECO:0000353"/>
    <property type="project" value="PomBase"/>
</dbReference>
<dbReference type="GO" id="GO:1990757">
    <property type="term" value="F:ubiquitin ligase activator activity"/>
    <property type="evidence" value="ECO:0000314"/>
    <property type="project" value="PomBase"/>
</dbReference>
<dbReference type="GO" id="GO:0031145">
    <property type="term" value="P:anaphase-promoting complex-dependent catabolic process"/>
    <property type="evidence" value="ECO:0000314"/>
    <property type="project" value="PomBase"/>
</dbReference>
<dbReference type="GO" id="GO:1990950">
    <property type="term" value="P:metaphase/anaphase transition of meiosis II"/>
    <property type="evidence" value="ECO:0000315"/>
    <property type="project" value="PomBase"/>
</dbReference>
<dbReference type="GO" id="GO:1905786">
    <property type="term" value="P:positive regulation of anaphase-promoting complex-dependent catabolic process"/>
    <property type="evidence" value="ECO:0000318"/>
    <property type="project" value="GO_Central"/>
</dbReference>
<dbReference type="GO" id="GO:0075296">
    <property type="term" value="P:positive regulation of ascospore formation"/>
    <property type="evidence" value="ECO:0000315"/>
    <property type="project" value="PomBase"/>
</dbReference>
<dbReference type="GO" id="GO:0051446">
    <property type="term" value="P:positive regulation of meiotic cell cycle"/>
    <property type="evidence" value="ECO:0000315"/>
    <property type="project" value="PomBase"/>
</dbReference>
<dbReference type="GO" id="GO:0030435">
    <property type="term" value="P:sporulation resulting in formation of a cellular spore"/>
    <property type="evidence" value="ECO:0007669"/>
    <property type="project" value="UniProtKB-KW"/>
</dbReference>
<dbReference type="Gene3D" id="2.130.10.10">
    <property type="entry name" value="YVTN repeat-like/Quinoprotein amine dehydrogenase"/>
    <property type="match status" value="1"/>
</dbReference>
<dbReference type="InterPro" id="IPR033010">
    <property type="entry name" value="Cdc20/Fizzy"/>
</dbReference>
<dbReference type="InterPro" id="IPR015943">
    <property type="entry name" value="WD40/YVTN_repeat-like_dom_sf"/>
</dbReference>
<dbReference type="InterPro" id="IPR056150">
    <property type="entry name" value="WD40_CDC20-Fz"/>
</dbReference>
<dbReference type="InterPro" id="IPR036322">
    <property type="entry name" value="WD40_repeat_dom_sf"/>
</dbReference>
<dbReference type="InterPro" id="IPR001680">
    <property type="entry name" value="WD40_rpt"/>
</dbReference>
<dbReference type="PANTHER" id="PTHR19918">
    <property type="entry name" value="CELL DIVISION CYCLE 20 CDC20 FIZZY -RELATED"/>
    <property type="match status" value="1"/>
</dbReference>
<dbReference type="PANTHER" id="PTHR19918:SF63">
    <property type="entry name" value="MEIOTIC FIZZY-RELATED PROTEIN 1"/>
    <property type="match status" value="1"/>
</dbReference>
<dbReference type="Pfam" id="PF24807">
    <property type="entry name" value="WD40_CDC20-Fz"/>
    <property type="match status" value="1"/>
</dbReference>
<dbReference type="SMART" id="SM00320">
    <property type="entry name" value="WD40"/>
    <property type="match status" value="6"/>
</dbReference>
<dbReference type="SUPFAM" id="SSF50978">
    <property type="entry name" value="WD40 repeat-like"/>
    <property type="match status" value="1"/>
</dbReference>
<dbReference type="PROSITE" id="PS50082">
    <property type="entry name" value="WD_REPEATS_2"/>
    <property type="match status" value="3"/>
</dbReference>
<dbReference type="PROSITE" id="PS50294">
    <property type="entry name" value="WD_REPEATS_REGION"/>
    <property type="match status" value="1"/>
</dbReference>
<comment type="function">
    <text evidence="2">Meiosis-specific activator of the anaphase promoting complex/cyclosome (APC/C). Involved in cdc13 degradation.</text>
</comment>
<comment type="subunit">
    <text evidence="3">Interacts with mes1.</text>
</comment>
<comment type="subcellular location">
    <subcellularLocation>
        <location evidence="2">Nucleus</location>
    </subcellularLocation>
</comment>
<comment type="similarity">
    <text evidence="4">Belongs to the WD repeat CDC20/Fizzy family.</text>
</comment>
<organism>
    <name type="scientific">Schizosaccharomyces pombe (strain 972 / ATCC 24843)</name>
    <name type="common">Fission yeast</name>
    <dbReference type="NCBI Taxonomy" id="284812"/>
    <lineage>
        <taxon>Eukaryota</taxon>
        <taxon>Fungi</taxon>
        <taxon>Dikarya</taxon>
        <taxon>Ascomycota</taxon>
        <taxon>Taphrinomycotina</taxon>
        <taxon>Schizosaccharomycetes</taxon>
        <taxon>Schizosaccharomycetales</taxon>
        <taxon>Schizosaccharomycetaceae</taxon>
        <taxon>Schizosaccharomyces</taxon>
    </lineage>
</organism>
<sequence length="421" mass="47237">MGDRFIPIRNVSNEFNFSFQSFKECVLSHGSNLRRKTSGTIQRQFMELLSMELFGSQASRSRAFYYGEDKRKIEKKMLDTPDRKSYSLSPISPQSQDMLRQPQKPKRAFPKTPYKILDAPYLKNDFYLNLLDWGQSNVLAVGLASSIYLWSAASGKVVQLHDFGATNHVTSVLWTGKGTQLAVGTDSGVIYIWDIESTKSVRSLKGHSERVAALAWNDNTLTSGGKDEVILHHDLRAPGCCAEMMKVHEQEICGLQWDRSLGQLASGGNDNNLFVWDYRSSRPLHKFEEHTAAVKAIGWSPHQRGILASGGGTIDRCLTIHNTLTGRLQNKLDTGSQVCNMAWSKTSNEIVTTHGFAKNQVSLWKYPSLKNIANLTAHTNRVLYLSMSPDGQSIVTGAGDETLRFWKLFNKKPKEESTLIR</sequence>
<keyword id="KW-0469">Meiosis</keyword>
<keyword id="KW-0539">Nucleus</keyword>
<keyword id="KW-1185">Reference proteome</keyword>
<keyword id="KW-0677">Repeat</keyword>
<keyword id="KW-0749">Sporulation</keyword>
<keyword id="KW-0853">WD repeat</keyword>
<protein>
    <recommendedName>
        <fullName>Meiotic fizzy-related protein 1</fullName>
    </recommendedName>
</protein>
<proteinExistence type="evidence at protein level"/>
<accession>O94423</accession>
<gene>
    <name type="primary">mfr1</name>
    <name type="ORF">SPBC1198.12</name>
    <name type="ORF">SPBC660.02</name>
</gene>
<feature type="chain" id="PRO_0000051077" description="Meiotic fizzy-related protein 1">
    <location>
        <begin position="1"/>
        <end position="421"/>
    </location>
</feature>
<feature type="repeat" description="WD 1">
    <location>
        <begin position="123"/>
        <end position="160"/>
    </location>
</feature>
<feature type="repeat" description="WD 2">
    <location>
        <begin position="164"/>
        <end position="203"/>
    </location>
</feature>
<feature type="repeat" description="WD 3">
    <location>
        <begin position="206"/>
        <end position="246"/>
    </location>
</feature>
<feature type="repeat" description="WD 4">
    <location>
        <begin position="247"/>
        <end position="286"/>
    </location>
</feature>
<feature type="repeat" description="WD 5">
    <location>
        <begin position="289"/>
        <end position="331"/>
    </location>
</feature>
<feature type="repeat" description="WD 6">
    <location>
        <begin position="333"/>
        <end position="374"/>
    </location>
</feature>
<feature type="repeat" description="WD 7">
    <location>
        <begin position="377"/>
        <end position="416"/>
    </location>
</feature>
<feature type="region of interest" description="Disordered" evidence="1">
    <location>
        <begin position="79"/>
        <end position="107"/>
    </location>
</feature>
<feature type="compositionally biased region" description="Polar residues" evidence="1">
    <location>
        <begin position="86"/>
        <end position="98"/>
    </location>
</feature>
<name>MFR1_SCHPO</name>
<evidence type="ECO:0000256" key="1">
    <source>
        <dbReference type="SAM" id="MobiDB-lite"/>
    </source>
</evidence>
<evidence type="ECO:0000269" key="2">
    <source>
    </source>
</evidence>
<evidence type="ECO:0000269" key="3">
    <source>
    </source>
</evidence>
<evidence type="ECO:0000305" key="4"/>